<gene>
    <name evidence="1" type="primary">gcvT</name>
    <name type="ordered locus">PC1_0622</name>
</gene>
<name>GCST_PECCP</name>
<comment type="function">
    <text evidence="1">The glycine cleavage system catalyzes the degradation of glycine.</text>
</comment>
<comment type="catalytic activity">
    <reaction evidence="1">
        <text>N(6)-[(R)-S(8)-aminomethyldihydrolipoyl]-L-lysyl-[protein] + (6S)-5,6,7,8-tetrahydrofolate = N(6)-[(R)-dihydrolipoyl]-L-lysyl-[protein] + (6R)-5,10-methylene-5,6,7,8-tetrahydrofolate + NH4(+)</text>
        <dbReference type="Rhea" id="RHEA:16945"/>
        <dbReference type="Rhea" id="RHEA-COMP:10475"/>
        <dbReference type="Rhea" id="RHEA-COMP:10492"/>
        <dbReference type="ChEBI" id="CHEBI:15636"/>
        <dbReference type="ChEBI" id="CHEBI:28938"/>
        <dbReference type="ChEBI" id="CHEBI:57453"/>
        <dbReference type="ChEBI" id="CHEBI:83100"/>
        <dbReference type="ChEBI" id="CHEBI:83143"/>
        <dbReference type="EC" id="2.1.2.10"/>
    </reaction>
</comment>
<comment type="subunit">
    <text evidence="1">The glycine cleavage system is composed of four proteins: P, T, L and H.</text>
</comment>
<comment type="similarity">
    <text evidence="1">Belongs to the GcvT family.</text>
</comment>
<proteinExistence type="inferred from homology"/>
<organism>
    <name type="scientific">Pectobacterium carotovorum subsp. carotovorum (strain PC1)</name>
    <dbReference type="NCBI Taxonomy" id="561230"/>
    <lineage>
        <taxon>Bacteria</taxon>
        <taxon>Pseudomonadati</taxon>
        <taxon>Pseudomonadota</taxon>
        <taxon>Gammaproteobacteria</taxon>
        <taxon>Enterobacterales</taxon>
        <taxon>Pectobacteriaceae</taxon>
        <taxon>Pectobacterium</taxon>
    </lineage>
</organism>
<accession>C6D8W9</accession>
<protein>
    <recommendedName>
        <fullName evidence="1">Aminomethyltransferase</fullName>
        <ecNumber evidence="1">2.1.2.10</ecNumber>
    </recommendedName>
    <alternativeName>
        <fullName evidence="1">Glycine cleavage system T protein</fullName>
    </alternativeName>
</protein>
<sequence length="371" mass="40787">MAKQTPLYQQHLADGAKMVDFHGWMMPLHYGSQLDEHHIVRREAGIFDVSHMTIVDLHGARTREFLRYLLANDVAKLTQPGKALYTGMLNASGGVIDDLIVYFLTEDYFRLVVNSATREKDLAWIEQHAAPFGIEIREREDLALVAVQGPQAQEKVQAILKAKGLSDADVAAVASMKPFFGKQAGDFFVATTGYTGEAGYEIALPNEQVVDFWQQLLAAGVKPCGLGARDTLRLEAGMNLYGQDMDEGISPLAANMGWTIAWQPEDRQFIGREALTHQREKGTDQLVGLVLTEKGVLRNDLPVRFTDSDGVMREGVITSGSFSPTLGVSIALARVPLGIGEQAIVQIRNRELPVHVTKPGFVRAGKAIVQY</sequence>
<evidence type="ECO:0000255" key="1">
    <source>
        <dbReference type="HAMAP-Rule" id="MF_00259"/>
    </source>
</evidence>
<dbReference type="EC" id="2.1.2.10" evidence="1"/>
<dbReference type="EMBL" id="CP001657">
    <property type="protein sequence ID" value="ACT11677.1"/>
    <property type="molecule type" value="Genomic_DNA"/>
</dbReference>
<dbReference type="RefSeq" id="WP_012773324.1">
    <property type="nucleotide sequence ID" value="NC_012917.1"/>
</dbReference>
<dbReference type="SMR" id="C6D8W9"/>
<dbReference type="STRING" id="561230.PC1_0622"/>
<dbReference type="KEGG" id="pct:PC1_0622"/>
<dbReference type="eggNOG" id="COG0404">
    <property type="taxonomic scope" value="Bacteria"/>
</dbReference>
<dbReference type="HOGENOM" id="CLU_007884_10_2_6"/>
<dbReference type="OrthoDB" id="9774591at2"/>
<dbReference type="Proteomes" id="UP000002736">
    <property type="component" value="Chromosome"/>
</dbReference>
<dbReference type="GO" id="GO:0005829">
    <property type="term" value="C:cytosol"/>
    <property type="evidence" value="ECO:0007669"/>
    <property type="project" value="TreeGrafter"/>
</dbReference>
<dbReference type="GO" id="GO:0005960">
    <property type="term" value="C:glycine cleavage complex"/>
    <property type="evidence" value="ECO:0007669"/>
    <property type="project" value="InterPro"/>
</dbReference>
<dbReference type="GO" id="GO:0004047">
    <property type="term" value="F:aminomethyltransferase activity"/>
    <property type="evidence" value="ECO:0007669"/>
    <property type="project" value="UniProtKB-UniRule"/>
</dbReference>
<dbReference type="GO" id="GO:0008483">
    <property type="term" value="F:transaminase activity"/>
    <property type="evidence" value="ECO:0007669"/>
    <property type="project" value="UniProtKB-KW"/>
</dbReference>
<dbReference type="GO" id="GO:0019464">
    <property type="term" value="P:glycine decarboxylation via glycine cleavage system"/>
    <property type="evidence" value="ECO:0007669"/>
    <property type="project" value="UniProtKB-UniRule"/>
</dbReference>
<dbReference type="FunFam" id="2.40.30.110:FF:000001">
    <property type="entry name" value="Aminomethyltransferase"/>
    <property type="match status" value="1"/>
</dbReference>
<dbReference type="FunFam" id="3.30.70.1400:FF:000001">
    <property type="entry name" value="Aminomethyltransferase"/>
    <property type="match status" value="1"/>
</dbReference>
<dbReference type="FunFam" id="4.10.1250.10:FF:000001">
    <property type="entry name" value="Aminomethyltransferase"/>
    <property type="match status" value="1"/>
</dbReference>
<dbReference type="Gene3D" id="2.40.30.110">
    <property type="entry name" value="Aminomethyltransferase beta-barrel domains"/>
    <property type="match status" value="1"/>
</dbReference>
<dbReference type="Gene3D" id="3.30.70.1400">
    <property type="entry name" value="Aminomethyltransferase beta-barrel domains"/>
    <property type="match status" value="1"/>
</dbReference>
<dbReference type="Gene3D" id="4.10.1250.10">
    <property type="entry name" value="Aminomethyltransferase fragment"/>
    <property type="match status" value="1"/>
</dbReference>
<dbReference type="Gene3D" id="3.30.1360.120">
    <property type="entry name" value="Probable tRNA modification gtpase trme, domain 1"/>
    <property type="match status" value="1"/>
</dbReference>
<dbReference type="HAMAP" id="MF_00259">
    <property type="entry name" value="GcvT"/>
    <property type="match status" value="1"/>
</dbReference>
<dbReference type="InterPro" id="IPR006223">
    <property type="entry name" value="GCS_T"/>
</dbReference>
<dbReference type="InterPro" id="IPR022903">
    <property type="entry name" value="GCS_T_bac"/>
</dbReference>
<dbReference type="InterPro" id="IPR013977">
    <property type="entry name" value="GCST_C"/>
</dbReference>
<dbReference type="InterPro" id="IPR006222">
    <property type="entry name" value="GCV_T_N"/>
</dbReference>
<dbReference type="InterPro" id="IPR028896">
    <property type="entry name" value="GcvT/YgfZ/DmdA"/>
</dbReference>
<dbReference type="InterPro" id="IPR029043">
    <property type="entry name" value="GcvT/YgfZ_C"/>
</dbReference>
<dbReference type="InterPro" id="IPR027266">
    <property type="entry name" value="TrmE/GcvT_dom1"/>
</dbReference>
<dbReference type="NCBIfam" id="TIGR00528">
    <property type="entry name" value="gcvT"/>
    <property type="match status" value="1"/>
</dbReference>
<dbReference type="NCBIfam" id="NF001567">
    <property type="entry name" value="PRK00389.1"/>
    <property type="match status" value="1"/>
</dbReference>
<dbReference type="PANTHER" id="PTHR43757">
    <property type="entry name" value="AMINOMETHYLTRANSFERASE"/>
    <property type="match status" value="1"/>
</dbReference>
<dbReference type="PANTHER" id="PTHR43757:SF2">
    <property type="entry name" value="AMINOMETHYLTRANSFERASE, MITOCHONDRIAL"/>
    <property type="match status" value="1"/>
</dbReference>
<dbReference type="Pfam" id="PF01571">
    <property type="entry name" value="GCV_T"/>
    <property type="match status" value="1"/>
</dbReference>
<dbReference type="Pfam" id="PF08669">
    <property type="entry name" value="GCV_T_C"/>
    <property type="match status" value="1"/>
</dbReference>
<dbReference type="PIRSF" id="PIRSF006487">
    <property type="entry name" value="GcvT"/>
    <property type="match status" value="1"/>
</dbReference>
<dbReference type="SUPFAM" id="SSF101790">
    <property type="entry name" value="Aminomethyltransferase beta-barrel domain"/>
    <property type="match status" value="1"/>
</dbReference>
<dbReference type="SUPFAM" id="SSF103025">
    <property type="entry name" value="Folate-binding domain"/>
    <property type="match status" value="1"/>
</dbReference>
<keyword id="KW-0032">Aminotransferase</keyword>
<keyword id="KW-0808">Transferase</keyword>
<reference key="1">
    <citation type="submission" date="2009-07" db="EMBL/GenBank/DDBJ databases">
        <title>Complete sequence of Pectobacterium carotovorum subsp. carotovorum PC1.</title>
        <authorList>
            <consortium name="US DOE Joint Genome Institute"/>
            <person name="Lucas S."/>
            <person name="Copeland A."/>
            <person name="Lapidus A."/>
            <person name="Glavina del Rio T."/>
            <person name="Tice H."/>
            <person name="Bruce D."/>
            <person name="Goodwin L."/>
            <person name="Pitluck S."/>
            <person name="Munk A.C."/>
            <person name="Brettin T."/>
            <person name="Detter J.C."/>
            <person name="Han C."/>
            <person name="Tapia R."/>
            <person name="Larimer F."/>
            <person name="Land M."/>
            <person name="Hauser L."/>
            <person name="Kyrpides N."/>
            <person name="Mikhailova N."/>
            <person name="Balakrishnan V."/>
            <person name="Glasner J."/>
            <person name="Perna N.T."/>
        </authorList>
    </citation>
    <scope>NUCLEOTIDE SEQUENCE [LARGE SCALE GENOMIC DNA]</scope>
    <source>
        <strain>PC1</strain>
    </source>
</reference>
<feature type="chain" id="PRO_1000204641" description="Aminomethyltransferase">
    <location>
        <begin position="1"/>
        <end position="371"/>
    </location>
</feature>